<reference key="1">
    <citation type="journal article" date="2006" name="PLoS Biol.">
        <title>The genome of deep-sea vent chemolithoautotroph Thiomicrospira crunogena XCL-2.</title>
        <authorList>
            <person name="Scott K.M."/>
            <person name="Sievert S.M."/>
            <person name="Abril F.N."/>
            <person name="Ball L.A."/>
            <person name="Barrett C.J."/>
            <person name="Blake R.A."/>
            <person name="Boller A.J."/>
            <person name="Chain P.S.G."/>
            <person name="Clark J.A."/>
            <person name="Davis C.R."/>
            <person name="Detter C."/>
            <person name="Do K.F."/>
            <person name="Dobrinski K.P."/>
            <person name="Faza B.I."/>
            <person name="Fitzpatrick K.A."/>
            <person name="Freyermuth S.K."/>
            <person name="Harmer T.L."/>
            <person name="Hauser L.J."/>
            <person name="Huegler M."/>
            <person name="Kerfeld C.A."/>
            <person name="Klotz M.G."/>
            <person name="Kong W.W."/>
            <person name="Land M."/>
            <person name="Lapidus A."/>
            <person name="Larimer F.W."/>
            <person name="Longo D.L."/>
            <person name="Lucas S."/>
            <person name="Malfatti S.A."/>
            <person name="Massey S.E."/>
            <person name="Martin D.D."/>
            <person name="McCuddin Z."/>
            <person name="Meyer F."/>
            <person name="Moore J.L."/>
            <person name="Ocampo L.H. Jr."/>
            <person name="Paul J.H."/>
            <person name="Paulsen I.T."/>
            <person name="Reep D.K."/>
            <person name="Ren Q."/>
            <person name="Ross R.L."/>
            <person name="Sato P.Y."/>
            <person name="Thomas P."/>
            <person name="Tinkham L.E."/>
            <person name="Zeruth G.T."/>
        </authorList>
    </citation>
    <scope>NUCLEOTIDE SEQUENCE [LARGE SCALE GENOMIC DNA]</scope>
    <source>
        <strain>DSM 25203 / XCL-2</strain>
    </source>
</reference>
<proteinExistence type="inferred from homology"/>
<gene>
    <name evidence="2" type="primary">argF</name>
    <name type="ordered locus">Tcr_0532</name>
</gene>
<dbReference type="EC" id="2.1.3.3" evidence="2"/>
<dbReference type="EMBL" id="CP000109">
    <property type="protein sequence ID" value="ABB41128.1"/>
    <property type="molecule type" value="Genomic_DNA"/>
</dbReference>
<dbReference type="SMR" id="Q31I95"/>
<dbReference type="STRING" id="317025.Tcr_0532"/>
<dbReference type="KEGG" id="tcx:Tcr_0532"/>
<dbReference type="eggNOG" id="COG0078">
    <property type="taxonomic scope" value="Bacteria"/>
</dbReference>
<dbReference type="HOGENOM" id="CLU_043846_3_2_6"/>
<dbReference type="OrthoDB" id="9802587at2"/>
<dbReference type="UniPathway" id="UPA00068">
    <property type="reaction ID" value="UER00112"/>
</dbReference>
<dbReference type="GO" id="GO:0005737">
    <property type="term" value="C:cytoplasm"/>
    <property type="evidence" value="ECO:0007669"/>
    <property type="project" value="UniProtKB-SubCell"/>
</dbReference>
<dbReference type="GO" id="GO:0016597">
    <property type="term" value="F:amino acid binding"/>
    <property type="evidence" value="ECO:0007669"/>
    <property type="project" value="InterPro"/>
</dbReference>
<dbReference type="GO" id="GO:0004585">
    <property type="term" value="F:ornithine carbamoyltransferase activity"/>
    <property type="evidence" value="ECO:0007669"/>
    <property type="project" value="UniProtKB-UniRule"/>
</dbReference>
<dbReference type="GO" id="GO:0042450">
    <property type="term" value="P:arginine biosynthetic process via ornithine"/>
    <property type="evidence" value="ECO:0007669"/>
    <property type="project" value="TreeGrafter"/>
</dbReference>
<dbReference type="GO" id="GO:0019240">
    <property type="term" value="P:citrulline biosynthetic process"/>
    <property type="evidence" value="ECO:0007669"/>
    <property type="project" value="TreeGrafter"/>
</dbReference>
<dbReference type="GO" id="GO:0006526">
    <property type="term" value="P:L-arginine biosynthetic process"/>
    <property type="evidence" value="ECO:0007669"/>
    <property type="project" value="UniProtKB-UniPathway"/>
</dbReference>
<dbReference type="FunFam" id="3.40.50.1370:FF:000008">
    <property type="entry name" value="Ornithine carbamoyltransferase"/>
    <property type="match status" value="1"/>
</dbReference>
<dbReference type="Gene3D" id="3.40.50.1370">
    <property type="entry name" value="Aspartate/ornithine carbamoyltransferase"/>
    <property type="match status" value="2"/>
</dbReference>
<dbReference type="HAMAP" id="MF_01109">
    <property type="entry name" value="OTCase"/>
    <property type="match status" value="1"/>
</dbReference>
<dbReference type="InterPro" id="IPR006132">
    <property type="entry name" value="Asp/Orn_carbamoyltranf_P-bd"/>
</dbReference>
<dbReference type="InterPro" id="IPR006130">
    <property type="entry name" value="Asp/Orn_carbamoylTrfase"/>
</dbReference>
<dbReference type="InterPro" id="IPR036901">
    <property type="entry name" value="Asp/Orn_carbamoylTrfase_sf"/>
</dbReference>
<dbReference type="InterPro" id="IPR006131">
    <property type="entry name" value="Asp_carbamoyltransf_Asp/Orn-bd"/>
</dbReference>
<dbReference type="InterPro" id="IPR002292">
    <property type="entry name" value="Orn/put_carbamltrans"/>
</dbReference>
<dbReference type="InterPro" id="IPR024904">
    <property type="entry name" value="OTCase_ArgI"/>
</dbReference>
<dbReference type="NCBIfam" id="TIGR00658">
    <property type="entry name" value="orni_carb_tr"/>
    <property type="match status" value="1"/>
</dbReference>
<dbReference type="NCBIfam" id="NF001986">
    <property type="entry name" value="PRK00779.1"/>
    <property type="match status" value="1"/>
</dbReference>
<dbReference type="PANTHER" id="PTHR45753">
    <property type="entry name" value="ORNITHINE CARBAMOYLTRANSFERASE, MITOCHONDRIAL"/>
    <property type="match status" value="1"/>
</dbReference>
<dbReference type="PANTHER" id="PTHR45753:SF3">
    <property type="entry name" value="ORNITHINE TRANSCARBAMYLASE, MITOCHONDRIAL"/>
    <property type="match status" value="1"/>
</dbReference>
<dbReference type="Pfam" id="PF00185">
    <property type="entry name" value="OTCace"/>
    <property type="match status" value="1"/>
</dbReference>
<dbReference type="Pfam" id="PF02729">
    <property type="entry name" value="OTCace_N"/>
    <property type="match status" value="1"/>
</dbReference>
<dbReference type="PRINTS" id="PR00100">
    <property type="entry name" value="AOTCASE"/>
</dbReference>
<dbReference type="PRINTS" id="PR00102">
    <property type="entry name" value="OTCASE"/>
</dbReference>
<dbReference type="SUPFAM" id="SSF53671">
    <property type="entry name" value="Aspartate/ornithine carbamoyltransferase"/>
    <property type="match status" value="1"/>
</dbReference>
<dbReference type="PROSITE" id="PS00097">
    <property type="entry name" value="CARBAMOYLTRANSFERASE"/>
    <property type="match status" value="1"/>
</dbReference>
<protein>
    <recommendedName>
        <fullName evidence="2">Ornithine carbamoyltransferase</fullName>
        <shortName evidence="2">OTCase</shortName>
        <ecNumber evidence="2">2.1.3.3</ecNumber>
    </recommendedName>
</protein>
<sequence length="302" mass="34272">MSIKHFLTLQDFSPAELKQLMLRAIELKKIQKSGEIFEPLKNKTLAMIFEKSSTRTRISFEIGMSQLGGHALFLSPRDTQLGRGEPIEDTAKVISSMADGIMIRTFGHEVVEKMAEHSQVPVINALTDDYHPCQLLADMQTYYEHRGSIEGKTVLWVGDGNNMCHSYINAAKQYGFKLRISAPEDYDPNPRIVEANQEYVEMIRNPMDAAENVDLIVTDVWASMGQEEEQKKREKAFKDYQVNTAMMQQANPDALFMHCLPAHRGEEVSAEVMDAEDSVVWDEAENRLHAQKALLEYLMAKA</sequence>
<keyword id="KW-0028">Amino-acid biosynthesis</keyword>
<keyword id="KW-0055">Arginine biosynthesis</keyword>
<keyword id="KW-0963">Cytoplasm</keyword>
<keyword id="KW-0808">Transferase</keyword>
<accession>Q31I95</accession>
<organism>
    <name type="scientific">Hydrogenovibrio crunogenus (strain DSM 25203 / XCL-2)</name>
    <name type="common">Thiomicrospira crunogena</name>
    <dbReference type="NCBI Taxonomy" id="317025"/>
    <lineage>
        <taxon>Bacteria</taxon>
        <taxon>Pseudomonadati</taxon>
        <taxon>Pseudomonadota</taxon>
        <taxon>Gammaproteobacteria</taxon>
        <taxon>Thiotrichales</taxon>
        <taxon>Piscirickettsiaceae</taxon>
        <taxon>Hydrogenovibrio</taxon>
    </lineage>
</organism>
<comment type="function">
    <text evidence="1">Reversibly catalyzes the transfer of the carbamoyl group from carbamoyl phosphate (CP) to the N(epsilon) atom of ornithine (ORN) to produce L-citrulline.</text>
</comment>
<comment type="catalytic activity">
    <reaction evidence="2">
        <text>carbamoyl phosphate + L-ornithine = L-citrulline + phosphate + H(+)</text>
        <dbReference type="Rhea" id="RHEA:19513"/>
        <dbReference type="ChEBI" id="CHEBI:15378"/>
        <dbReference type="ChEBI" id="CHEBI:43474"/>
        <dbReference type="ChEBI" id="CHEBI:46911"/>
        <dbReference type="ChEBI" id="CHEBI:57743"/>
        <dbReference type="ChEBI" id="CHEBI:58228"/>
        <dbReference type="EC" id="2.1.3.3"/>
    </reaction>
</comment>
<comment type="pathway">
    <text evidence="2">Amino-acid biosynthesis; L-arginine biosynthesis; L-arginine from L-ornithine and carbamoyl phosphate: step 1/3.</text>
</comment>
<comment type="subcellular location">
    <subcellularLocation>
        <location evidence="2">Cytoplasm</location>
    </subcellularLocation>
</comment>
<comment type="similarity">
    <text evidence="2">Belongs to the aspartate/ornithine carbamoyltransferase superfamily. OTCase family.</text>
</comment>
<name>OTC_HYDCU</name>
<feature type="chain" id="PRO_1000065133" description="Ornithine carbamoyltransferase">
    <location>
        <begin position="1"/>
        <end position="302"/>
    </location>
</feature>
<feature type="binding site" evidence="2">
    <location>
        <begin position="53"/>
        <end position="56"/>
    </location>
    <ligand>
        <name>carbamoyl phosphate</name>
        <dbReference type="ChEBI" id="CHEBI:58228"/>
    </ligand>
</feature>
<feature type="binding site" evidence="2">
    <location>
        <position position="80"/>
    </location>
    <ligand>
        <name>carbamoyl phosphate</name>
        <dbReference type="ChEBI" id="CHEBI:58228"/>
    </ligand>
</feature>
<feature type="binding site" evidence="2">
    <location>
        <position position="104"/>
    </location>
    <ligand>
        <name>carbamoyl phosphate</name>
        <dbReference type="ChEBI" id="CHEBI:58228"/>
    </ligand>
</feature>
<feature type="binding site" evidence="2">
    <location>
        <begin position="131"/>
        <end position="134"/>
    </location>
    <ligand>
        <name>carbamoyl phosphate</name>
        <dbReference type="ChEBI" id="CHEBI:58228"/>
    </ligand>
</feature>
<feature type="binding site" evidence="2">
    <location>
        <position position="162"/>
    </location>
    <ligand>
        <name>L-ornithine</name>
        <dbReference type="ChEBI" id="CHEBI:46911"/>
    </ligand>
</feature>
<feature type="binding site" evidence="2">
    <location>
        <position position="219"/>
    </location>
    <ligand>
        <name>L-ornithine</name>
        <dbReference type="ChEBI" id="CHEBI:46911"/>
    </ligand>
</feature>
<feature type="binding site" evidence="2">
    <location>
        <begin position="223"/>
        <end position="224"/>
    </location>
    <ligand>
        <name>L-ornithine</name>
        <dbReference type="ChEBI" id="CHEBI:46911"/>
    </ligand>
</feature>
<feature type="binding site" evidence="2">
    <location>
        <begin position="259"/>
        <end position="260"/>
    </location>
    <ligand>
        <name>carbamoyl phosphate</name>
        <dbReference type="ChEBI" id="CHEBI:58228"/>
    </ligand>
</feature>
<feature type="binding site" evidence="2">
    <location>
        <position position="287"/>
    </location>
    <ligand>
        <name>carbamoyl phosphate</name>
        <dbReference type="ChEBI" id="CHEBI:58228"/>
    </ligand>
</feature>
<evidence type="ECO:0000250" key="1"/>
<evidence type="ECO:0000255" key="2">
    <source>
        <dbReference type="HAMAP-Rule" id="MF_01109"/>
    </source>
</evidence>